<accession>B2J5G4</accession>
<evidence type="ECO:0000255" key="1">
    <source>
        <dbReference type="HAMAP-Rule" id="MF_00038"/>
    </source>
</evidence>
<gene>
    <name evidence="1" type="primary">mraY</name>
    <name type="ordered locus">Npun_F3940</name>
</gene>
<feature type="chain" id="PRO_1000090649" description="Phospho-N-acetylmuramoyl-pentapeptide-transferase">
    <location>
        <begin position="1"/>
        <end position="363"/>
    </location>
</feature>
<feature type="transmembrane region" description="Helical" evidence="1">
    <location>
        <begin position="13"/>
        <end position="33"/>
    </location>
</feature>
<feature type="transmembrane region" description="Helical" evidence="1">
    <location>
        <begin position="49"/>
        <end position="69"/>
    </location>
</feature>
<feature type="transmembrane region" description="Helical" evidence="1">
    <location>
        <begin position="95"/>
        <end position="115"/>
    </location>
</feature>
<feature type="transmembrane region" description="Helical" evidence="1">
    <location>
        <begin position="119"/>
        <end position="139"/>
    </location>
</feature>
<feature type="transmembrane region" description="Helical" evidence="1">
    <location>
        <begin position="154"/>
        <end position="174"/>
    </location>
</feature>
<feature type="transmembrane region" description="Helical" evidence="1">
    <location>
        <begin position="183"/>
        <end position="203"/>
    </location>
</feature>
<feature type="transmembrane region" description="Helical" evidence="1">
    <location>
        <begin position="224"/>
        <end position="244"/>
    </location>
</feature>
<feature type="transmembrane region" description="Helical" evidence="1">
    <location>
        <begin position="281"/>
        <end position="301"/>
    </location>
</feature>
<feature type="transmembrane region" description="Helical" evidence="1">
    <location>
        <begin position="343"/>
        <end position="363"/>
    </location>
</feature>
<sequence>MDAKLSPEQGLNISGIALASLLAVGLGTTAFFLDSMANRLPWQSMSLTLPLLLCAMGSGVVGFWVIPLLQALKTGQIIREDGPQAHLKKAGTPTMGGIFFIPVGVIIACILSNFATDVLAVSALTTSYGFIGWLDDWQILRRKSNKGISPRTKLALQVGFAAVFCLWLMFNQPSNITNIALPWVSFTLPLGFLFWPLAGFVLVAESNATNLTDGIDGLAAGTVAIALLALGALIAPTAPGLMVFCAALSGGCLGFLAHNRNPARVFMGDTGSLALGGALAAVALLTNTLVALFILSGIFFVETLSVMAQVSYYKATKGPDGKGKRLFKMAPLHHHLELTGWSELQVVGVFYVIAAILAAICLA</sequence>
<comment type="function">
    <text evidence="1">Catalyzes the initial step of the lipid cycle reactions in the biosynthesis of the cell wall peptidoglycan: transfers peptidoglycan precursor phospho-MurNAc-pentapeptide from UDP-MurNAc-pentapeptide onto the lipid carrier undecaprenyl phosphate, yielding undecaprenyl-pyrophosphoryl-MurNAc-pentapeptide, known as lipid I.</text>
</comment>
<comment type="catalytic activity">
    <reaction evidence="1">
        <text>UDP-N-acetyl-alpha-D-muramoyl-L-alanyl-gamma-D-glutamyl-meso-2,6-diaminopimeloyl-D-alanyl-D-alanine + di-trans,octa-cis-undecaprenyl phosphate = di-trans,octa-cis-undecaprenyl diphospho-N-acetyl-alpha-D-muramoyl-L-alanyl-D-glutamyl-meso-2,6-diaminopimeloyl-D-alanyl-D-alanine + UMP</text>
        <dbReference type="Rhea" id="RHEA:28386"/>
        <dbReference type="ChEBI" id="CHEBI:57865"/>
        <dbReference type="ChEBI" id="CHEBI:60392"/>
        <dbReference type="ChEBI" id="CHEBI:61386"/>
        <dbReference type="ChEBI" id="CHEBI:61387"/>
        <dbReference type="EC" id="2.7.8.13"/>
    </reaction>
</comment>
<comment type="cofactor">
    <cofactor evidence="1">
        <name>Mg(2+)</name>
        <dbReference type="ChEBI" id="CHEBI:18420"/>
    </cofactor>
</comment>
<comment type="pathway">
    <text evidence="1">Cell wall biogenesis; peptidoglycan biosynthesis.</text>
</comment>
<comment type="subcellular location">
    <subcellularLocation>
        <location evidence="1">Cell inner membrane</location>
        <topology evidence="1">Multi-pass membrane protein</topology>
    </subcellularLocation>
</comment>
<comment type="similarity">
    <text evidence="1">Belongs to the glycosyltransferase 4 family. MraY subfamily.</text>
</comment>
<dbReference type="EC" id="2.7.8.13" evidence="1"/>
<dbReference type="EMBL" id="CP001037">
    <property type="protein sequence ID" value="ACC82321.1"/>
    <property type="molecule type" value="Genomic_DNA"/>
</dbReference>
<dbReference type="RefSeq" id="WP_012410289.1">
    <property type="nucleotide sequence ID" value="NC_010628.1"/>
</dbReference>
<dbReference type="SMR" id="B2J5G4"/>
<dbReference type="STRING" id="63737.Npun_F3940"/>
<dbReference type="EnsemblBacteria" id="ACC82321">
    <property type="protein sequence ID" value="ACC82321"/>
    <property type="gene ID" value="Npun_F3940"/>
</dbReference>
<dbReference type="KEGG" id="npu:Npun_F3940"/>
<dbReference type="eggNOG" id="COG0472">
    <property type="taxonomic scope" value="Bacteria"/>
</dbReference>
<dbReference type="HOGENOM" id="CLU_023982_0_2_3"/>
<dbReference type="OrthoDB" id="9805475at2"/>
<dbReference type="PhylomeDB" id="B2J5G4"/>
<dbReference type="UniPathway" id="UPA00219"/>
<dbReference type="Proteomes" id="UP000001191">
    <property type="component" value="Chromosome"/>
</dbReference>
<dbReference type="GO" id="GO:0005886">
    <property type="term" value="C:plasma membrane"/>
    <property type="evidence" value="ECO:0007669"/>
    <property type="project" value="UniProtKB-SubCell"/>
</dbReference>
<dbReference type="GO" id="GO:0046872">
    <property type="term" value="F:metal ion binding"/>
    <property type="evidence" value="ECO:0007669"/>
    <property type="project" value="UniProtKB-KW"/>
</dbReference>
<dbReference type="GO" id="GO:0008963">
    <property type="term" value="F:phospho-N-acetylmuramoyl-pentapeptide-transferase activity"/>
    <property type="evidence" value="ECO:0007669"/>
    <property type="project" value="UniProtKB-UniRule"/>
</dbReference>
<dbReference type="GO" id="GO:0051992">
    <property type="term" value="F:UDP-N-acetylmuramoyl-L-alanyl-D-glutamyl-meso-2,6-diaminopimelyl-D-alanyl-D-alanine:undecaprenyl-phosphate transferase activity"/>
    <property type="evidence" value="ECO:0007669"/>
    <property type="project" value="RHEA"/>
</dbReference>
<dbReference type="GO" id="GO:0051301">
    <property type="term" value="P:cell division"/>
    <property type="evidence" value="ECO:0007669"/>
    <property type="project" value="UniProtKB-KW"/>
</dbReference>
<dbReference type="GO" id="GO:0071555">
    <property type="term" value="P:cell wall organization"/>
    <property type="evidence" value="ECO:0007669"/>
    <property type="project" value="UniProtKB-KW"/>
</dbReference>
<dbReference type="GO" id="GO:0009252">
    <property type="term" value="P:peptidoglycan biosynthetic process"/>
    <property type="evidence" value="ECO:0007669"/>
    <property type="project" value="UniProtKB-UniRule"/>
</dbReference>
<dbReference type="GO" id="GO:0008360">
    <property type="term" value="P:regulation of cell shape"/>
    <property type="evidence" value="ECO:0007669"/>
    <property type="project" value="UniProtKB-KW"/>
</dbReference>
<dbReference type="CDD" id="cd06852">
    <property type="entry name" value="GT_MraY"/>
    <property type="match status" value="1"/>
</dbReference>
<dbReference type="HAMAP" id="MF_00038">
    <property type="entry name" value="MraY"/>
    <property type="match status" value="1"/>
</dbReference>
<dbReference type="InterPro" id="IPR000715">
    <property type="entry name" value="Glycosyl_transferase_4"/>
</dbReference>
<dbReference type="InterPro" id="IPR003524">
    <property type="entry name" value="PNAcMuramoyl-5peptid_Trfase"/>
</dbReference>
<dbReference type="InterPro" id="IPR018480">
    <property type="entry name" value="PNAcMuramoyl-5peptid_Trfase_CS"/>
</dbReference>
<dbReference type="NCBIfam" id="TIGR00445">
    <property type="entry name" value="mraY"/>
    <property type="match status" value="1"/>
</dbReference>
<dbReference type="PANTHER" id="PTHR22926">
    <property type="entry name" value="PHOSPHO-N-ACETYLMURAMOYL-PENTAPEPTIDE-TRANSFERASE"/>
    <property type="match status" value="1"/>
</dbReference>
<dbReference type="PANTHER" id="PTHR22926:SF5">
    <property type="entry name" value="PHOSPHO-N-ACETYLMURAMOYL-PENTAPEPTIDE-TRANSFERASE HOMOLOG"/>
    <property type="match status" value="1"/>
</dbReference>
<dbReference type="Pfam" id="PF00953">
    <property type="entry name" value="Glycos_transf_4"/>
    <property type="match status" value="1"/>
</dbReference>
<dbReference type="Pfam" id="PF10555">
    <property type="entry name" value="MraY_sig1"/>
    <property type="match status" value="1"/>
</dbReference>
<dbReference type="PROSITE" id="PS01347">
    <property type="entry name" value="MRAY_1"/>
    <property type="match status" value="1"/>
</dbReference>
<dbReference type="PROSITE" id="PS01348">
    <property type="entry name" value="MRAY_2"/>
    <property type="match status" value="1"/>
</dbReference>
<protein>
    <recommendedName>
        <fullName evidence="1">Phospho-N-acetylmuramoyl-pentapeptide-transferase</fullName>
        <ecNumber evidence="1">2.7.8.13</ecNumber>
    </recommendedName>
    <alternativeName>
        <fullName evidence="1">UDP-MurNAc-pentapeptide phosphotransferase</fullName>
    </alternativeName>
</protein>
<organism>
    <name type="scientific">Nostoc punctiforme (strain ATCC 29133 / PCC 73102)</name>
    <dbReference type="NCBI Taxonomy" id="63737"/>
    <lineage>
        <taxon>Bacteria</taxon>
        <taxon>Bacillati</taxon>
        <taxon>Cyanobacteriota</taxon>
        <taxon>Cyanophyceae</taxon>
        <taxon>Nostocales</taxon>
        <taxon>Nostocaceae</taxon>
        <taxon>Nostoc</taxon>
    </lineage>
</organism>
<reference key="1">
    <citation type="journal article" date="2013" name="Plant Physiol.">
        <title>A Nostoc punctiforme Sugar Transporter Necessary to Establish a Cyanobacterium-Plant Symbiosis.</title>
        <authorList>
            <person name="Ekman M."/>
            <person name="Picossi S."/>
            <person name="Campbell E.L."/>
            <person name="Meeks J.C."/>
            <person name="Flores E."/>
        </authorList>
    </citation>
    <scope>NUCLEOTIDE SEQUENCE [LARGE SCALE GENOMIC DNA]</scope>
    <source>
        <strain>ATCC 29133 / PCC 73102</strain>
    </source>
</reference>
<proteinExistence type="inferred from homology"/>
<name>MRAY_NOSP7</name>
<keyword id="KW-0131">Cell cycle</keyword>
<keyword id="KW-0132">Cell division</keyword>
<keyword id="KW-0997">Cell inner membrane</keyword>
<keyword id="KW-1003">Cell membrane</keyword>
<keyword id="KW-0133">Cell shape</keyword>
<keyword id="KW-0961">Cell wall biogenesis/degradation</keyword>
<keyword id="KW-0460">Magnesium</keyword>
<keyword id="KW-0472">Membrane</keyword>
<keyword id="KW-0479">Metal-binding</keyword>
<keyword id="KW-0573">Peptidoglycan synthesis</keyword>
<keyword id="KW-1185">Reference proteome</keyword>
<keyword id="KW-0808">Transferase</keyword>
<keyword id="KW-0812">Transmembrane</keyword>
<keyword id="KW-1133">Transmembrane helix</keyword>